<comment type="function">
    <text evidence="1">Involved in chromosome condensation, segregation and cell cycle progression. May participate in facilitating chromosome segregation by condensation DNA from both sides of a centrally located replisome during cell division. Not required for mini-F plasmid partitioning. Probably acts via its interaction with MukB and MukE. Overexpression results in anucleate cells. It has a calcium binding activity.</text>
</comment>
<comment type="subunit">
    <text evidence="1">Interacts, and probably forms a ternary complex, with MukE and MukB via its C-terminal region. The complex formation is stimulated by calcium or magnesium. It is required for an interaction between MukE and MukB.</text>
</comment>
<comment type="subcellular location">
    <subcellularLocation>
        <location evidence="1">Cytoplasm</location>
        <location evidence="1">Nucleoid</location>
    </subcellularLocation>
    <text evidence="1">Restricted to the nucleoid region.</text>
</comment>
<comment type="similarity">
    <text evidence="1">Belongs to the MukF family.</text>
</comment>
<protein>
    <recommendedName>
        <fullName evidence="1">Chromosome partition protein MukF</fullName>
    </recommendedName>
</protein>
<keyword id="KW-0106">Calcium</keyword>
<keyword id="KW-0131">Cell cycle</keyword>
<keyword id="KW-0132">Cell division</keyword>
<keyword id="KW-0159">Chromosome partition</keyword>
<keyword id="KW-0963">Cytoplasm</keyword>
<keyword id="KW-0226">DNA condensation</keyword>
<organism>
    <name type="scientific">Escherichia coli (strain ATCC 8739 / DSM 1576 / NBRC 3972 / NCIMB 8545 / WDCM 00012 / Crooks)</name>
    <dbReference type="NCBI Taxonomy" id="481805"/>
    <lineage>
        <taxon>Bacteria</taxon>
        <taxon>Pseudomonadati</taxon>
        <taxon>Pseudomonadota</taxon>
        <taxon>Gammaproteobacteria</taxon>
        <taxon>Enterobacterales</taxon>
        <taxon>Enterobacteriaceae</taxon>
        <taxon>Escherichia</taxon>
    </lineage>
</organism>
<feature type="chain" id="PRO_1000088223" description="Chromosome partition protein MukF">
    <location>
        <begin position="1"/>
        <end position="440"/>
    </location>
</feature>
<feature type="region of interest" description="Leucine-zipper">
    <location>
        <begin position="208"/>
        <end position="236"/>
    </location>
</feature>
<accession>B1IW09</accession>
<reference key="1">
    <citation type="submission" date="2008-02" db="EMBL/GenBank/DDBJ databases">
        <title>Complete sequence of Escherichia coli C str. ATCC 8739.</title>
        <authorList>
            <person name="Copeland A."/>
            <person name="Lucas S."/>
            <person name="Lapidus A."/>
            <person name="Glavina del Rio T."/>
            <person name="Dalin E."/>
            <person name="Tice H."/>
            <person name="Bruce D."/>
            <person name="Goodwin L."/>
            <person name="Pitluck S."/>
            <person name="Kiss H."/>
            <person name="Brettin T."/>
            <person name="Detter J.C."/>
            <person name="Han C."/>
            <person name="Kuske C.R."/>
            <person name="Schmutz J."/>
            <person name="Larimer F."/>
            <person name="Land M."/>
            <person name="Hauser L."/>
            <person name="Kyrpides N."/>
            <person name="Mikhailova N."/>
            <person name="Ingram L."/>
            <person name="Richardson P."/>
        </authorList>
    </citation>
    <scope>NUCLEOTIDE SEQUENCE [LARGE SCALE GENOMIC DNA]</scope>
    <source>
        <strain>ATCC 8739 / DSM 1576 / NBRC 3972 / NCIMB 8545 / WDCM 00012 / Crooks</strain>
    </source>
</reference>
<evidence type="ECO:0000255" key="1">
    <source>
        <dbReference type="HAMAP-Rule" id="MF_01803"/>
    </source>
</evidence>
<proteinExistence type="inferred from homology"/>
<name>MUKF_ECOLC</name>
<gene>
    <name evidence="1" type="primary">mukF</name>
    <name type="ordered locus">EcolC_2674</name>
</gene>
<sequence>MSEFSQTVPELVAWARKNDFSISLPVDRLSFLLAVATLNGERLDGEMSEGELVDAFRHVSDAFEQTSETIGVRANNAINDMVRQRLLNRFTSEQAEGNAIYRLTPLGIGITDYYIRQREFSTLRLSMQLSIVAGELKRAADAAEEGGDEFHWHRNVYAPLKYSVAEIFDSIDLTQRLMDEQQQQVKDDIAQLLNKDWRAAISSCELLLSETSGTLRELQDTLEAAGDKLQANLLRIQDATMTHDDLHFVDRLVFDLQSKLDRIICWGQQSIDLWIGYDRHVHKFIRTAIDMDKNRVFAQRLRQSVQTYFDEPWALTYANADRLLDMRDEEMALRDEEVTGELPEDLEYEEFNEIREQLAAIIEEQLAVYKTRQVPLDLGLVVREYLSQYPRARHFDVARIVIDQAVRLGVAQADFTGLPAKWQPINDYGAKVQAHVIDKY</sequence>
<dbReference type="EMBL" id="CP000946">
    <property type="protein sequence ID" value="ACA78303.1"/>
    <property type="molecule type" value="Genomic_DNA"/>
</dbReference>
<dbReference type="RefSeq" id="WP_001288843.1">
    <property type="nucleotide sequence ID" value="NC_010468.1"/>
</dbReference>
<dbReference type="SMR" id="B1IW09"/>
<dbReference type="KEGG" id="ecl:EcolC_2674"/>
<dbReference type="HOGENOM" id="CLU_049853_0_0_6"/>
<dbReference type="GO" id="GO:0005737">
    <property type="term" value="C:cytoplasm"/>
    <property type="evidence" value="ECO:0007669"/>
    <property type="project" value="UniProtKB-UniRule"/>
</dbReference>
<dbReference type="GO" id="GO:0009295">
    <property type="term" value="C:nucleoid"/>
    <property type="evidence" value="ECO:0007669"/>
    <property type="project" value="UniProtKB-SubCell"/>
</dbReference>
<dbReference type="GO" id="GO:0005509">
    <property type="term" value="F:calcium ion binding"/>
    <property type="evidence" value="ECO:0007669"/>
    <property type="project" value="UniProtKB-UniRule"/>
</dbReference>
<dbReference type="GO" id="GO:0051301">
    <property type="term" value="P:cell division"/>
    <property type="evidence" value="ECO:0007669"/>
    <property type="project" value="UniProtKB-KW"/>
</dbReference>
<dbReference type="GO" id="GO:0030261">
    <property type="term" value="P:chromosome condensation"/>
    <property type="evidence" value="ECO:0007669"/>
    <property type="project" value="UniProtKB-KW"/>
</dbReference>
<dbReference type="GO" id="GO:0007059">
    <property type="term" value="P:chromosome segregation"/>
    <property type="evidence" value="ECO:0007669"/>
    <property type="project" value="UniProtKB-UniRule"/>
</dbReference>
<dbReference type="GO" id="GO:0006260">
    <property type="term" value="P:DNA replication"/>
    <property type="evidence" value="ECO:0007669"/>
    <property type="project" value="UniProtKB-UniRule"/>
</dbReference>
<dbReference type="CDD" id="cd16337">
    <property type="entry name" value="MukF_C"/>
    <property type="match status" value="1"/>
</dbReference>
<dbReference type="CDD" id="cd16335">
    <property type="entry name" value="MukF_N"/>
    <property type="match status" value="1"/>
</dbReference>
<dbReference type="Gene3D" id="1.20.58.590">
    <property type="entry name" value="Chromosome partition protein MukF, middle domain"/>
    <property type="match status" value="1"/>
</dbReference>
<dbReference type="Gene3D" id="1.10.225.40">
    <property type="entry name" value="MukF, C-terminal domain"/>
    <property type="match status" value="1"/>
</dbReference>
<dbReference type="Gene3D" id="1.10.10.10">
    <property type="entry name" value="Winged helix-like DNA-binding domain superfamily/Winged helix DNA-binding domain"/>
    <property type="match status" value="1"/>
</dbReference>
<dbReference type="HAMAP" id="MF_01803">
    <property type="entry name" value="MukF"/>
    <property type="match status" value="1"/>
</dbReference>
<dbReference type="InterPro" id="IPR005582">
    <property type="entry name" value="Chromosome_partition_MukF"/>
</dbReference>
<dbReference type="InterPro" id="IPR033441">
    <property type="entry name" value="MukF_C"/>
</dbReference>
<dbReference type="InterPro" id="IPR038198">
    <property type="entry name" value="MukF_C_sf"/>
</dbReference>
<dbReference type="InterPro" id="IPR033440">
    <property type="entry name" value="MukF_M"/>
</dbReference>
<dbReference type="InterPro" id="IPR036141">
    <property type="entry name" value="MukF_M_sp"/>
</dbReference>
<dbReference type="InterPro" id="IPR033439">
    <property type="entry name" value="MukF_WHTH"/>
</dbReference>
<dbReference type="InterPro" id="IPR036388">
    <property type="entry name" value="WH-like_DNA-bd_sf"/>
</dbReference>
<dbReference type="InterPro" id="IPR036390">
    <property type="entry name" value="WH_DNA-bd_sf"/>
</dbReference>
<dbReference type="NCBIfam" id="NF003615">
    <property type="entry name" value="PRK05260.1"/>
    <property type="match status" value="1"/>
</dbReference>
<dbReference type="Pfam" id="PF03882">
    <property type="entry name" value="KicB"/>
    <property type="match status" value="1"/>
</dbReference>
<dbReference type="Pfam" id="PF17193">
    <property type="entry name" value="MukF_C"/>
    <property type="match status" value="1"/>
</dbReference>
<dbReference type="Pfam" id="PF17192">
    <property type="entry name" value="MukF_M"/>
    <property type="match status" value="1"/>
</dbReference>
<dbReference type="PIRSF" id="PIRSF018282">
    <property type="entry name" value="MukF"/>
    <property type="match status" value="1"/>
</dbReference>
<dbReference type="SUPFAM" id="SSF140570">
    <property type="entry name" value="MukF C-terminal domain-like"/>
    <property type="match status" value="1"/>
</dbReference>
<dbReference type="SUPFAM" id="SSF46785">
    <property type="entry name" value="Winged helix' DNA-binding domain"/>
    <property type="match status" value="1"/>
</dbReference>